<comment type="function">
    <text evidence="3 7 9">Forms an icosahedral capsid with a T=7 symmetry and a 40 nm diameter. The capsid is composed of 72 pentamers linked to each other by disulfide bonds and associated with VP2 or VP3 proteins. Interacts with a N-linked glycoprotein containing terminal alpha(2-6)-linked sialic acids on the cell surface to provide virion attachment to target cell. The serotonergic receptor 5HT2AR also acts as a cellular receptor for JCV on human glial cells. Once attached, the virions enter predominantly by a ligand-inducible clathrin-dependent pathway and traffic to the ER. Inside the endoplasmic reticulum, the protein folding machinery isomerizes VP1 interpentamer disulfide bonds, thereby triggering initial uncoating. Next, the virion uses the endoplasmic reticulum-associated degradation machinery to probably translocate in the cytosol before reaching the nucleus. Nuclear entry of the viral DNA involves the selective exposure and importin recognition of VP2/Vp3 nuclear localization signal. In late phase of infection, neo-synthesized VP1 encapsulates replicated genomic DNA at nuclear domains called promyelocytic leukemia (PML) bodies, and participates in rearranging nucleosomes around the viral DNA.</text>
</comment>
<comment type="subunit">
    <text evidence="1 5 6">Homomultimer; disulfide-linked. The virus capsid is composed of 72 icosahedral units, each one composed of five disulfide-linked copies of VP1. Interacts with minor capsid proteins VP2 and VP3 (By similarity). Interacts with host 5HT2AR.</text>
</comment>
<comment type="subcellular location">
    <subcellularLocation>
        <location>Virion</location>
    </subcellularLocation>
    <subcellularLocation>
        <location evidence="4">Host nucleus</location>
    </subcellularLocation>
    <text evidence="4">Virions are efficiently assembled at nuclear domain 10 (ND10), which is also known as promyelocytic leukemia (PML) nuclear bodies.</text>
</comment>
<comment type="alternative products">
    <event type="alternative splicing"/>
    <event type="alternative initiation"/>
    <isoform>
        <id>P03089-1</id>
        <name>VP1</name>
        <name>Major capsid protein VP1</name>
        <sequence type="displayed"/>
    </isoform>
    <isoform>
        <id>P03095-1</id>
        <name>VP2</name>
        <name>Minor capsid protein VP2</name>
        <sequence type="external"/>
    </isoform>
    <isoform>
        <id>P03095-2</id>
        <name>VP3</name>
        <name>Minor capsid protein VP3</name>
        <sequence type="external"/>
    </isoform>
    <isoform>
        <id>P03095-3</id>
        <name>VP4</name>
        <name>Viroporin VP4</name>
        <sequence type="external"/>
    </isoform>
    <isoform>
        <id>P03086-1</id>
        <name>Agno</name>
        <sequence type="external"/>
    </isoform>
</comment>
<comment type="domain">
    <text evidence="2">The intrinsically disordered C-terminal arm interacts with neighboring pentamers. The unstructured nature of this region allows to make different interactions depending on the structural context: pentamers present at the 12 icosahedral fivefold axes bind five pentamers, whereas pentamers present at the 60 icosahedral six-fold axes interact with six pentamers.</text>
</comment>
<comment type="miscellaneous">
    <molecule>Isoform VP1</molecule>
    <text>Produced by alternative splicing of the late mRNA.</text>
</comment>
<comment type="similarity">
    <text evidence="8">Belongs to the polyomaviruses coat protein VP1 family.</text>
</comment>
<proteinExistence type="evidence at protein level"/>
<organism>
    <name type="scientific">JC polyomavirus</name>
    <name type="common">JCPyV</name>
    <name type="synonym">JCV</name>
    <dbReference type="NCBI Taxonomy" id="10632"/>
    <lineage>
        <taxon>Viruses</taxon>
        <taxon>Monodnaviria</taxon>
        <taxon>Shotokuvirae</taxon>
        <taxon>Cossaviricota</taxon>
        <taxon>Papovaviricetes</taxon>
        <taxon>Sepolyvirales</taxon>
        <taxon>Polyomaviridae</taxon>
        <taxon>Betapolyomavirus</taxon>
        <taxon>Betapolyomavirus secuhominis</taxon>
    </lineage>
</organism>
<organismHost>
    <name type="scientific">Homo sapiens</name>
    <name type="common">Human</name>
    <dbReference type="NCBI Taxonomy" id="9606"/>
</organismHost>
<evidence type="ECO:0000250" key="1"/>
<evidence type="ECO:0000250" key="2">
    <source>
        <dbReference type="UniProtKB" id="P03087"/>
    </source>
</evidence>
<evidence type="ECO:0000269" key="3">
    <source>
    </source>
</evidence>
<evidence type="ECO:0000269" key="4">
    <source>
    </source>
</evidence>
<evidence type="ECO:0000269" key="5">
    <source>
    </source>
</evidence>
<evidence type="ECO:0000269" key="6">
    <source>
    </source>
</evidence>
<evidence type="ECO:0000269" key="7">
    <source>
    </source>
</evidence>
<evidence type="ECO:0000305" key="8"/>
<evidence type="ECO:0000305" key="9">
    <source>
    </source>
</evidence>
<evidence type="ECO:0007829" key="10">
    <source>
        <dbReference type="PDB" id="4JCE"/>
    </source>
</evidence>
<evidence type="ECO:0007829" key="11">
    <source>
        <dbReference type="PDB" id="4X17"/>
    </source>
</evidence>
<sequence>MAPTKRKGERKDPVQVPKLLIRGGVEVLEVKTGVDSITEVECFLTPEMGDPDEHLRGFSKSISISDTFESDSPNRDMLPCYSVARIPLPNLNEDLTCGNILMWEAVTLKTEVIGVTSLMNVHSNGQATHDNGAGKPVQGTSFHFFSVGGEALELQGVLFNYRTKYPDGTIFPKNATVQSQVMNTEHKAYLDKNKAYPVECWVPDPTRNENTRYFGTLTGGENVPPVLHITNTATTVLLDEFGVGPLCKGDNLYLSAVDVCGMFTNRSGSQQWRGLSRYFKVQLRKRRVKNPYPISFLLTDLINRRTPRVDGQPMYGMDAQVEEVRVFEGTEELPGDPDMMRYVDKYGQLQTKML</sequence>
<feature type="chain" id="PRO_0000115021" description="Major capsid protein VP1">
    <location>
        <begin position="1"/>
        <end position="354"/>
    </location>
</feature>
<feature type="region of interest" description="C-terminal arm" evidence="2">
    <location>
        <begin position="294"/>
        <end position="354"/>
    </location>
</feature>
<feature type="modified residue" description="Phosphothreonine; by host" evidence="1">
    <location>
        <position position="330"/>
    </location>
</feature>
<feature type="disulfide bond" description="Interchain (with C-97)" evidence="1">
    <location>
        <position position="97"/>
    </location>
</feature>
<feature type="sequence variant" description="In strain: Isolate MAD11-BR.">
    <original>D</original>
    <variation>H</variation>
    <location>
        <position position="66"/>
    </location>
</feature>
<feature type="sequence variant" description="In strain: Isolate NY-1B, Isolate N1 and Isolate G3.">
    <original>N</original>
    <variation>S</variation>
    <location>
        <position position="74"/>
    </location>
</feature>
<feature type="sequence variant" description="In strain: Isolate YI, Isolate TKY-2A, Isolate MAD8-BR, Isolate HER1-BR, Isolate NY-1B, Isolate N1, Isolate N4, Isolate G3, Isolate C1, Isolate CY, Isolate MY, Isolate AIC-1A and Isolate Tokyo-1.">
    <original>R</original>
    <variation>K</variation>
    <location>
        <position position="75"/>
    </location>
</feature>
<feature type="sequence variant" description="In strain: Isolate YI, Isolate C1, Isolate AIC-1A and Isolate Tokyo-1.">
    <original>I</original>
    <variation>L</variation>
    <location>
        <position position="113"/>
    </location>
</feature>
<feature type="sequence variant" description="In strain: Isolate YI, Isolate TKY-2A, Isolate MAD8-BR, Isolate N4, Isolate C1, Isolate CY, Isolate MY, Isolate AIC-1A and Isolate Tokyo-1.">
    <original>S</original>
    <variation>T</variation>
    <location>
        <position position="117"/>
    </location>
</feature>
<feature type="sequence variant" description="In strain: Isolate MAD8-BR, Isolate NY-1B, Isolate N1, Isolate G3 and Isolate N4.">
    <original>T</original>
    <variation>A</variation>
    <location>
        <position position="128"/>
    </location>
</feature>
<feature type="sequence variant" description="In strain: Isolate YI, Isolate TKY-2A, Isolate MAD8-BR, Isolate NY-1B, Isolate N1, Isolate N4, Isolate G3, Isolate C1, Isolate CY, Isolate MY, Isolate AIC-1A and Isolate Tokyo-1.">
    <original>L</original>
    <variation>V</variation>
    <location>
        <position position="158"/>
    </location>
</feature>
<feature type="sequence variant" description="In strain: Isolate HER1-BR.">
    <original>S</original>
    <variation>L</variation>
    <location>
        <position position="267"/>
    </location>
</feature>
<feature type="sequence variant" description="In strain: Isolate MAD8-BR.">
    <original>S</original>
    <variation>F</variation>
    <location>
        <position position="269"/>
    </location>
</feature>
<feature type="sequence variant" description="In strain: Isolate YI.">
    <original>S</original>
    <variation>T</variation>
    <location>
        <position position="269"/>
    </location>
</feature>
<feature type="sequence variant" description="In strain: Isolate TKY-2A.">
    <original>S</original>
    <variation>Y</variation>
    <location>
        <position position="269"/>
    </location>
</feature>
<feature type="sequence variant" description="In strain: Isolate C1.">
    <original>V</original>
    <variation>I</variation>
    <location>
        <position position="321"/>
    </location>
</feature>
<feature type="sequence variant" description="In strain: Isolate YI, Isolate TKY-2A, Isolate MAD8-BR, Isolate N1, Isolate N4, Isolate G4, Isolate C1, Isolate CY, Isolate MY, Isolate AIC-1A and Isolate Tokyo-1.">
    <original>K</original>
    <variation>R</variation>
    <location>
        <position position="345"/>
    </location>
</feature>
<feature type="strand" evidence="11">
    <location>
        <begin position="27"/>
        <end position="30"/>
    </location>
</feature>
<feature type="helix" evidence="11">
    <location>
        <begin position="34"/>
        <end position="36"/>
    </location>
</feature>
<feature type="strand" evidence="11">
    <location>
        <begin position="37"/>
        <end position="44"/>
    </location>
</feature>
<feature type="strand" evidence="11">
    <location>
        <begin position="65"/>
        <end position="68"/>
    </location>
</feature>
<feature type="helix" evidence="11">
    <location>
        <begin position="75"/>
        <end position="77"/>
    </location>
</feature>
<feature type="strand" evidence="11">
    <location>
        <begin position="82"/>
        <end position="87"/>
    </location>
</feature>
<feature type="strand" evidence="11">
    <location>
        <begin position="101"/>
        <end position="113"/>
    </location>
</feature>
<feature type="helix" evidence="11">
    <location>
        <begin position="115"/>
        <end position="119"/>
    </location>
</feature>
<feature type="strand" evidence="11">
    <location>
        <begin position="122"/>
        <end position="125"/>
    </location>
</feature>
<feature type="strand" evidence="11">
    <location>
        <begin position="127"/>
        <end position="129"/>
    </location>
</feature>
<feature type="strand" evidence="11">
    <location>
        <begin position="137"/>
        <end position="139"/>
    </location>
</feature>
<feature type="strand" evidence="11">
    <location>
        <begin position="141"/>
        <end position="150"/>
    </location>
</feature>
<feature type="strand" evidence="11">
    <location>
        <begin position="153"/>
        <end position="156"/>
    </location>
</feature>
<feature type="helix" evidence="11">
    <location>
        <begin position="177"/>
        <end position="180"/>
    </location>
</feature>
<feature type="strand" evidence="11">
    <location>
        <begin position="187"/>
        <end position="189"/>
    </location>
</feature>
<feature type="turn" evidence="10">
    <location>
        <begin position="193"/>
        <end position="195"/>
    </location>
</feature>
<feature type="helix" evidence="11">
    <location>
        <begin position="198"/>
        <end position="200"/>
    </location>
</feature>
<feature type="strand" evidence="11">
    <location>
        <begin position="201"/>
        <end position="203"/>
    </location>
</feature>
<feature type="strand" evidence="11">
    <location>
        <begin position="211"/>
        <end position="218"/>
    </location>
</feature>
<feature type="strand" evidence="11">
    <location>
        <begin position="226"/>
        <end position="232"/>
    </location>
</feature>
<feature type="helix" evidence="11">
    <location>
        <begin position="248"/>
        <end position="250"/>
    </location>
</feature>
<feature type="strand" evidence="11">
    <location>
        <begin position="251"/>
        <end position="265"/>
    </location>
</feature>
<feature type="strand" evidence="11">
    <location>
        <begin position="270"/>
        <end position="274"/>
    </location>
</feature>
<feature type="strand" evidence="11">
    <location>
        <begin position="276"/>
        <end position="288"/>
    </location>
</feature>
<keyword id="KW-0002">3D-structure</keyword>
<keyword id="KW-0024">Alternative initiation</keyword>
<keyword id="KW-0025">Alternative splicing</keyword>
<keyword id="KW-0167">Capsid protein</keyword>
<keyword id="KW-1165">Clathrin-mediated endocytosis of virus by host</keyword>
<keyword id="KW-1015">Disulfide bond</keyword>
<keyword id="KW-1048">Host nucleus</keyword>
<keyword id="KW-0945">Host-virus interaction</keyword>
<keyword id="KW-0426">Late protein</keyword>
<keyword id="KW-0597">Phosphoprotein</keyword>
<keyword id="KW-1185">Reference proteome</keyword>
<keyword id="KW-1145">T=7 icosahedral capsid protein</keyword>
<keyword id="KW-1161">Viral attachment to host cell</keyword>
<keyword id="KW-1162">Viral penetration into host cytoplasm</keyword>
<keyword id="KW-0946">Virion</keyword>
<keyword id="KW-1164">Virus endocytosis by host</keyword>
<keyword id="KW-1160">Virus entry into host cell</keyword>
<dbReference type="EMBL" id="J02226">
    <property type="protein sequence ID" value="AAA82101.1"/>
    <property type="molecule type" value="Genomic_DNA"/>
</dbReference>
<dbReference type="EMBL" id="D11356">
    <property type="protein sequence ID" value="BAA01958.1"/>
    <property type="molecule type" value="Genomic_DNA"/>
</dbReference>
<dbReference type="EMBL" id="D11357">
    <property type="protein sequence ID" value="BAA01959.1"/>
    <property type="molecule type" value="Genomic_DNA"/>
</dbReference>
<dbReference type="EMBL" id="D11358">
    <property type="protein sequence ID" value="BAA01960.1"/>
    <property type="molecule type" value="Genomic_DNA"/>
</dbReference>
<dbReference type="EMBL" id="D11359">
    <property type="protein sequence ID" value="BAA01961.1"/>
    <property type="molecule type" value="Genomic_DNA"/>
</dbReference>
<dbReference type="EMBL" id="D11360">
    <property type="protein sequence ID" value="BAA01962.1"/>
    <property type="molecule type" value="Genomic_DNA"/>
</dbReference>
<dbReference type="EMBL" id="D11361">
    <property type="protein sequence ID" value="BAA01963.1"/>
    <property type="molecule type" value="Genomic_DNA"/>
</dbReference>
<dbReference type="EMBL" id="D11362">
    <property type="protein sequence ID" value="BAA01964.1"/>
    <property type="molecule type" value="Genomic_DNA"/>
</dbReference>
<dbReference type="EMBL" id="D11363">
    <property type="protein sequence ID" value="BAA01965.1"/>
    <property type="molecule type" value="Genomic_DNA"/>
</dbReference>
<dbReference type="EMBL" id="D11364">
    <property type="protein sequence ID" value="BAA01966.1"/>
    <property type="molecule type" value="Genomic_DNA"/>
</dbReference>
<dbReference type="EMBL" id="D11365">
    <property type="protein sequence ID" value="BAA01967.1"/>
    <property type="molecule type" value="Genomic_DNA"/>
</dbReference>
<dbReference type="EMBL" id="D11366">
    <property type="protein sequence ID" value="BAA01968.1"/>
    <property type="molecule type" value="Genomic_DNA"/>
</dbReference>
<dbReference type="EMBL" id="D11368">
    <property type="protein sequence ID" value="BAA01970.1"/>
    <property type="molecule type" value="Genomic_DNA"/>
</dbReference>
<dbReference type="EMBL" id="D26589">
    <property type="protein sequence ID" value="BAA05636.1"/>
    <property type="molecule type" value="Genomic_DNA"/>
</dbReference>
<dbReference type="EMBL" id="D26591">
    <property type="protein sequence ID" value="BAA05638.1"/>
    <property type="molecule type" value="Genomic_DNA"/>
</dbReference>
<dbReference type="EMBL" id="D26592">
    <property type="protein sequence ID" value="BAA05639.1"/>
    <property type="molecule type" value="Genomic_DNA"/>
</dbReference>
<dbReference type="PIR" id="A03626">
    <property type="entry name" value="VVVP1J"/>
</dbReference>
<dbReference type="RefSeq" id="NP_043511.1">
    <molecule id="P03089-1"/>
    <property type="nucleotide sequence ID" value="NC_001699.1"/>
</dbReference>
<dbReference type="PDB" id="3NXD">
    <property type="method" value="X-ray"/>
    <property type="resolution" value="2.00 A"/>
    <property type="chains" value="A/B/C/D/E=23-290"/>
</dbReference>
<dbReference type="PDB" id="3NXG">
    <property type="method" value="X-ray"/>
    <property type="resolution" value="1.95 A"/>
    <property type="chains" value="A/B/C/D/E=23-290"/>
</dbReference>
<dbReference type="PDB" id="4JCD">
    <property type="method" value="X-ray"/>
    <property type="resolution" value="2.00 A"/>
    <property type="chains" value="A/B/C/D/E=23-290"/>
</dbReference>
<dbReference type="PDB" id="4JCE">
    <property type="method" value="X-ray"/>
    <property type="resolution" value="1.90 A"/>
    <property type="chains" value="A/B/C/D/E=23-290"/>
</dbReference>
<dbReference type="PDB" id="4JCF">
    <property type="method" value="X-ray"/>
    <property type="resolution" value="2.20 A"/>
    <property type="chains" value="A/B/C/D/E=23-290"/>
</dbReference>
<dbReference type="PDB" id="4WDY">
    <property type="method" value="X-ray"/>
    <property type="resolution" value="1.90 A"/>
    <property type="chains" value="A/B/C/D/E=23-290"/>
</dbReference>
<dbReference type="PDB" id="4WDZ">
    <property type="method" value="X-ray"/>
    <property type="resolution" value="1.80 A"/>
    <property type="chains" value="A/B/C/D/E=23-290"/>
</dbReference>
<dbReference type="PDB" id="4WE0">
    <property type="method" value="X-ray"/>
    <property type="resolution" value="2.10 A"/>
    <property type="chains" value="A/B/C/D/E=23-290"/>
</dbReference>
<dbReference type="PDB" id="4X14">
    <property type="method" value="X-ray"/>
    <property type="resolution" value="2.30 A"/>
    <property type="chains" value="A/B/C/D/E=23-290"/>
</dbReference>
<dbReference type="PDB" id="4X15">
    <property type="method" value="X-ray"/>
    <property type="resolution" value="2.11 A"/>
    <property type="chains" value="A/B/C/D/E=23-290"/>
</dbReference>
<dbReference type="PDB" id="4X16">
    <property type="method" value="X-ray"/>
    <property type="resolution" value="1.80 A"/>
    <property type="chains" value="A/B/C/D/E=23-290"/>
</dbReference>
<dbReference type="PDB" id="4X17">
    <property type="method" value="X-ray"/>
    <property type="resolution" value="1.75 A"/>
    <property type="chains" value="A/B/C/D/E=23-290"/>
</dbReference>
<dbReference type="PDB" id="7PA6">
    <property type="method" value="X-ray"/>
    <property type="resolution" value="1.90 A"/>
    <property type="chains" value="AAA/BBB/CCC/DDD/EEE/FFF/GGG/HHH/III/JJJ=23-290"/>
</dbReference>
<dbReference type="PDB" id="7PA8">
    <property type="method" value="X-ray"/>
    <property type="resolution" value="3.15 A"/>
    <property type="chains" value="AAA/BBB/CCC/DDD/EEE=23-290"/>
</dbReference>
<dbReference type="PDB" id="7PA9">
    <property type="method" value="X-ray"/>
    <property type="resolution" value="2.75 A"/>
    <property type="chains" value="AAA/BBB/CCC/DDD/EEE/FFF/GGG/HHH/III/JJJ=23-290"/>
</dbReference>
<dbReference type="PDB" id="7PAA">
    <property type="method" value="X-ray"/>
    <property type="resolution" value="3.10 A"/>
    <property type="chains" value="AAA/BBB/CCC/DDD/EEE/FFF/GGG/HHH/III/JJJ=23-290"/>
</dbReference>
<dbReference type="PDB" id="7ZIL">
    <property type="method" value="X-ray"/>
    <property type="resolution" value="1.24 A"/>
    <property type="chains" value="AAA/BBB/CCC/DDD/EEE=23-290"/>
</dbReference>
<dbReference type="PDB" id="7ZIM">
    <property type="method" value="X-ray"/>
    <property type="resolution" value="1.55 A"/>
    <property type="chains" value="AAA/BBB/CCC/DDD/EEE=23-290"/>
</dbReference>
<dbReference type="PDB" id="7ZIN">
    <property type="method" value="X-ray"/>
    <property type="resolution" value="1.65 A"/>
    <property type="chains" value="AAA/BBB/CCC/DDD/EEE=23-290"/>
</dbReference>
<dbReference type="PDB" id="7ZIO">
    <property type="method" value="X-ray"/>
    <property type="resolution" value="1.75 A"/>
    <property type="chains" value="AAA/BBB/CCC/DDD/EEE=23-290"/>
</dbReference>
<dbReference type="PDBsum" id="3NXD"/>
<dbReference type="PDBsum" id="3NXG"/>
<dbReference type="PDBsum" id="4JCD"/>
<dbReference type="PDBsum" id="4JCE"/>
<dbReference type="PDBsum" id="4JCF"/>
<dbReference type="PDBsum" id="4WDY"/>
<dbReference type="PDBsum" id="4WDZ"/>
<dbReference type="PDBsum" id="4WE0"/>
<dbReference type="PDBsum" id="4X14"/>
<dbReference type="PDBsum" id="4X15"/>
<dbReference type="PDBsum" id="4X16"/>
<dbReference type="PDBsum" id="4X17"/>
<dbReference type="PDBsum" id="7PA6"/>
<dbReference type="PDBsum" id="7PA8"/>
<dbReference type="PDBsum" id="7PA9"/>
<dbReference type="PDBsum" id="7PAA"/>
<dbReference type="PDBsum" id="7ZIL"/>
<dbReference type="PDBsum" id="7ZIM"/>
<dbReference type="PDBsum" id="7ZIN"/>
<dbReference type="PDBsum" id="7ZIO"/>
<dbReference type="SMR" id="P03089"/>
<dbReference type="UniLectin" id="P03089"/>
<dbReference type="DNASU" id="1489518"/>
<dbReference type="GeneID" id="1489518"/>
<dbReference type="KEGG" id="vg:1489518"/>
<dbReference type="OrthoDB" id="12524at10239"/>
<dbReference type="EvolutionaryTrace" id="P03089"/>
<dbReference type="Proteomes" id="UP000008478">
    <property type="component" value="Genome"/>
</dbReference>
<dbReference type="GO" id="GO:0042025">
    <property type="term" value="C:host cell nucleus"/>
    <property type="evidence" value="ECO:0007669"/>
    <property type="project" value="UniProtKB-SubCell"/>
</dbReference>
<dbReference type="GO" id="GO:0039620">
    <property type="term" value="C:T=7 icosahedral viral capsid"/>
    <property type="evidence" value="ECO:0007669"/>
    <property type="project" value="UniProtKB-KW"/>
</dbReference>
<dbReference type="GO" id="GO:0005198">
    <property type="term" value="F:structural molecule activity"/>
    <property type="evidence" value="ECO:0007669"/>
    <property type="project" value="InterPro"/>
</dbReference>
<dbReference type="GO" id="GO:0075512">
    <property type="term" value="P:clathrin-dependent endocytosis of virus by host cell"/>
    <property type="evidence" value="ECO:0007669"/>
    <property type="project" value="UniProtKB-KW"/>
</dbReference>
<dbReference type="GO" id="GO:0019062">
    <property type="term" value="P:virion attachment to host cell"/>
    <property type="evidence" value="ECO:0007669"/>
    <property type="project" value="UniProtKB-KW"/>
</dbReference>
<dbReference type="Gene3D" id="2.60.175.10">
    <property type="entry name" value="Capsid protein VP1,Polyomavirus"/>
    <property type="match status" value="1"/>
</dbReference>
<dbReference type="InterPro" id="IPR000662">
    <property type="entry name" value="Capsid_VP1_Polyomavir"/>
</dbReference>
<dbReference type="InterPro" id="IPR011222">
    <property type="entry name" value="dsDNA_vir_gr_I_capsid"/>
</dbReference>
<dbReference type="InterPro" id="IPR036931">
    <property type="entry name" value="Polyomavir_VP1_sf"/>
</dbReference>
<dbReference type="Pfam" id="PF00718">
    <property type="entry name" value="Polyoma_coat"/>
    <property type="match status" value="1"/>
</dbReference>
<dbReference type="PIRSF" id="PIRSF003376">
    <property type="entry name" value="Capsid_VP1_Polyomavir"/>
    <property type="match status" value="1"/>
</dbReference>
<dbReference type="SUPFAM" id="SSF88648">
    <property type="entry name" value="Group I dsDNA viruses"/>
    <property type="match status" value="1"/>
</dbReference>
<protein>
    <recommendedName>
        <fullName>Major capsid protein VP1</fullName>
    </recommendedName>
    <alternativeName>
        <fullName>Major structural protein VP1</fullName>
    </alternativeName>
</protein>
<name>VP1_POVJC</name>
<reference key="1">
    <citation type="journal article" date="1984" name="J. Virol.">
        <title>Human polyomavirus JC virus genome.</title>
        <authorList>
            <person name="Frisque R.J."/>
            <person name="Bream G.L."/>
            <person name="Cannella M.T."/>
        </authorList>
    </citation>
    <scope>NUCLEOTIDE SEQUENCE [GENOMIC DNA]</scope>
    <source>
        <strain>MAD-1</strain>
    </source>
</reference>
<reference key="2">
    <citation type="journal article" date="1993" name="Proc. Natl. Acad. Sci. U.S.A.">
        <title>Origin of JC polyomavirus variants associated with progressive multifocal leukoencephalopathy.</title>
        <authorList>
            <person name="Iida T."/>
            <person name="Kitamura T."/>
            <person name="Guo J."/>
            <person name="Taguchi F."/>
            <person name="Aso Y."/>
            <person name="Nagashima K."/>
            <person name="Yogo Y."/>
        </authorList>
    </citation>
    <scope>NUCLEOTIDE SEQUENCE [GENOMIC DNA]</scope>
    <source>
        <strain>C1</strain>
        <strain>CY</strain>
        <strain>G2</strain>
        <strain>G3</strain>
        <strain>HER1-BR</strain>
        <strain>MAD11-BR</strain>
        <strain>MAD8-BR</strain>
        <strain>MY</strain>
        <strain>N1</strain>
        <strain>N4</strain>
        <strain>NY-1B</strain>
        <strain>Tokyo-1</strain>
    </source>
</reference>
<reference key="3">
    <citation type="journal article" date="1994" name="Virus Genes">
        <title>Occurrence of multiple JC virus variants with distinctive regulatory sequences in the brain of a single patient with progressive multifocal leukoencephalopathy.</title>
        <authorList>
            <person name="Yogo Y."/>
            <person name="Guo J."/>
            <person name="Iida T."/>
            <person name="Satoh K.I."/>
            <person name="Taguchi F."/>
            <person name="Takahashi H."/>
            <person name="Hall W.W."/>
            <person name="Nagashima K."/>
        </authorList>
    </citation>
    <scope>NUCLEOTIDE SEQUENCE [GENOMIC DNA]</scope>
    <source>
        <strain>NY-1B</strain>
    </source>
</reference>
<reference key="4">
    <citation type="journal article" date="1994" name="Jpn. J. Med. Sci. Biol.">
        <title>Phylogenetic comparison between archetypal and disease-associated JC virus isolates in Japan.</title>
        <authorList>
            <person name="Kato K."/>
            <person name="Guo J."/>
            <person name="Taguchi F."/>
            <person name="Daimaru O."/>
            <person name="Tajima T."/>
            <person name="Haibara H."/>
            <person name="Matsuda J."/>
            <person name="Sumiya S."/>
            <person name="Yogo Y."/>
        </authorList>
    </citation>
    <scope>NUCLEOTIDE SEQUENCE [GENOMIC DNA]</scope>
    <source>
        <strain>AIC-1A</strain>
        <strain>TKY-2A</strain>
        <strain>YI</strain>
    </source>
</reference>
<reference key="5">
    <citation type="journal article" date="1998" name="J. Virol.">
        <title>Infection of glial cells by the human polyomavirus JC is mediated by an N-linked glycoprotein containing terminal alpha(2-6)-linked sialic acids.</title>
        <authorList>
            <person name="Liu C.K."/>
            <person name="Wei G."/>
            <person name="Atwood W.J."/>
        </authorList>
    </citation>
    <scope>FUNCTION</scope>
</reference>
<reference key="6">
    <citation type="journal article" date="2000" name="J. Virol.">
        <title>JC virus enters human glial cells by clathrin-dependent receptor-mediated endocytosis.</title>
        <authorList>
            <person name="Pho M.T."/>
            <person name="Ashok A."/>
            <person name="Atwood W.J."/>
        </authorList>
    </citation>
    <scope>FUNCTION</scope>
</reference>
<reference key="7">
    <citation type="journal article" date="2004" name="J. Biol. Chem.">
        <title>Nuclear entry mechanism of the human polyomavirus JC virus-like particle: role of importins and the nuclear pore complex.</title>
        <authorList>
            <person name="Qu Q."/>
            <person name="Sawa H."/>
            <person name="Suzuki T."/>
            <person name="Semba S."/>
            <person name="Henmi C."/>
            <person name="Okada Y."/>
            <person name="Tsuda M."/>
            <person name="Tanaka S."/>
            <person name="Atwood W.J."/>
            <person name="Nagashima K."/>
        </authorList>
    </citation>
    <scope>NUCLEAR LOCALIZATION SIGNAL</scope>
</reference>
<reference key="8">
    <citation type="journal article" date="2004" name="Science">
        <title>The human polyomavirus, JCV, uses serotonin receptors to infect cells.</title>
        <authorList>
            <person name="Elphick G.F."/>
            <person name="Querbes W."/>
            <person name="Jordan J.A."/>
            <person name="Gee G.V."/>
            <person name="Eash S."/>
            <person name="Manley K."/>
            <person name="Dugan A."/>
            <person name="Stanifer M."/>
            <person name="Bhatnagar A."/>
            <person name="Kroeze W.K."/>
            <person name="Roth B.L."/>
            <person name="Atwood W.J."/>
        </authorList>
    </citation>
    <scope>INTERACTION WITH HOST 5HT2AR</scope>
</reference>
<reference key="9">
    <citation type="journal article" date="2009" name="Virology">
        <title>Structure, attachment and entry of polyoma- and papillomaviruses.</title>
        <authorList>
            <person name="Sapp M."/>
            <person name="Day P.M."/>
        </authorList>
    </citation>
    <scope>REVIEW</scope>
</reference>
<reference key="10">
    <citation type="journal article" date="2004" name="J. Virol.">
        <title>Major and minor capsid proteins of human polyomavirus JC cooperatively accumulate to nuclear domain 10 for assembly into virions.</title>
        <authorList>
            <person name="Shishido-Hara Y."/>
            <person name="Ichinose S."/>
            <person name="Higuchi K."/>
            <person name="Hara Y."/>
            <person name="Yasui K."/>
        </authorList>
    </citation>
    <scope>SUBCELLULAR LOCATION</scope>
</reference>
<reference key="11">
    <citation type="journal article" date="2009" name="Virology">
        <title>The Polyomaviridae: Contributions of virus structure to our understanding of virus receptors and infectious entry.</title>
        <authorList>
            <person name="Neu U."/>
            <person name="Stehle T."/>
            <person name="Atwood W.J."/>
        </authorList>
    </citation>
    <scope>REVIEW</scope>
</reference>
<reference key="12">
    <citation type="journal article" date="2010" name="Cell Host Microbe">
        <title>Structure-function analysis of the human JC polyomavirus establishes the LSTc pentasaccharide as a functional receptor motif.</title>
        <authorList>
            <person name="Neu U."/>
            <person name="Maginnis M.S."/>
            <person name="Palma A.S."/>
            <person name="Stroeh L.J."/>
            <person name="Nelson C.D."/>
            <person name="Feizi T."/>
            <person name="Atwood W.J."/>
            <person name="Stehle T."/>
        </authorList>
    </citation>
    <scope>X-RAY CRYSTALLOGRAPHY (2.0 ANGSTROMS) OF 23-290 IN COMPLEX WITH LINEAR SIALYLATED PENTASACCHARIDE</scope>
</reference>
<accession>P03089</accession>